<name>PSBH_EUGGR</name>
<geneLocation type="chloroplast"/>
<accession>P31555</accession>
<evidence type="ECO:0000255" key="1">
    <source>
        <dbReference type="HAMAP-Rule" id="MF_00752"/>
    </source>
</evidence>
<evidence type="ECO:0000305" key="2"/>
<gene>
    <name evidence="1" type="primary">psbH</name>
</gene>
<comment type="function">
    <text evidence="1">One of the components of the core complex of photosystem II (PSII), required for its stability and/or assembly. PSII is a light-driven water:plastoquinone oxidoreductase that uses light energy to abstract electrons from H(2)O, generating O(2) and a proton gradient subsequently used for ATP formation. It consists of a core antenna complex that captures photons, and an electron transfer chain that converts photonic excitation into a charge separation.</text>
</comment>
<comment type="subunit">
    <text evidence="2">PSII is composed of 1 copy each of membrane proteins PsbA, PsbB, PsbC, PsbD, PsbE, PsbF, PsbH, PsbI, PsbJ, PsbK, PsbL, PsbM, PsbT, PsbY, PsbZ, Psb30/Ycf12, at least 3 peripheral proteins of the oxygen-evolving complex and a large number of cofactors. It forms dimeric complexes.</text>
</comment>
<comment type="subcellular location">
    <subcellularLocation>
        <location evidence="1">Plastid</location>
        <location evidence="1">Chloroplast thylakoid membrane</location>
        <topology evidence="1">Single-pass membrane protein</topology>
    </subcellularLocation>
</comment>
<comment type="similarity">
    <text evidence="1">Belongs to the PsbH family.</text>
</comment>
<feature type="chain" id="PRO_0000070508" description="Photosystem II reaction center protein H">
    <location>
        <begin position="1"/>
        <end position="70"/>
    </location>
</feature>
<feature type="transmembrane region" description="Helical" evidence="1">
    <location>
        <begin position="40"/>
        <end position="60"/>
    </location>
</feature>
<dbReference type="EMBL" id="Z11874">
    <property type="status" value="NOT_ANNOTATED_CDS"/>
    <property type="molecule type" value="Genomic_DNA"/>
</dbReference>
<dbReference type="EMBL" id="X70810">
    <property type="protein sequence ID" value="CAA50131.1"/>
    <property type="molecule type" value="Genomic_DNA"/>
</dbReference>
<dbReference type="PIR" id="S34549">
    <property type="entry name" value="S34549"/>
</dbReference>
<dbReference type="RefSeq" id="NP_041944.1">
    <property type="nucleotide sequence ID" value="NC_001603.2"/>
</dbReference>
<dbReference type="SMR" id="P31555"/>
<dbReference type="GeneID" id="807488"/>
<dbReference type="GO" id="GO:0009535">
    <property type="term" value="C:chloroplast thylakoid membrane"/>
    <property type="evidence" value="ECO:0007669"/>
    <property type="project" value="UniProtKB-SubCell"/>
</dbReference>
<dbReference type="GO" id="GO:0009523">
    <property type="term" value="C:photosystem II"/>
    <property type="evidence" value="ECO:0007669"/>
    <property type="project" value="UniProtKB-KW"/>
</dbReference>
<dbReference type="GO" id="GO:0042301">
    <property type="term" value="F:phosphate ion binding"/>
    <property type="evidence" value="ECO:0007669"/>
    <property type="project" value="InterPro"/>
</dbReference>
<dbReference type="GO" id="GO:0015979">
    <property type="term" value="P:photosynthesis"/>
    <property type="evidence" value="ECO:0007669"/>
    <property type="project" value="UniProtKB-UniRule"/>
</dbReference>
<dbReference type="GO" id="GO:0050821">
    <property type="term" value="P:protein stabilization"/>
    <property type="evidence" value="ECO:0007669"/>
    <property type="project" value="InterPro"/>
</dbReference>
<dbReference type="Gene3D" id="1.20.5.880">
    <property type="entry name" value="Photosystem II reaction center protein H"/>
    <property type="match status" value="1"/>
</dbReference>
<dbReference type="HAMAP" id="MF_00752">
    <property type="entry name" value="PSII_PsbH"/>
    <property type="match status" value="1"/>
</dbReference>
<dbReference type="InterPro" id="IPR001056">
    <property type="entry name" value="PSII_PsbH"/>
</dbReference>
<dbReference type="InterPro" id="IPR036863">
    <property type="entry name" value="PSII_PsbH_sf"/>
</dbReference>
<dbReference type="NCBIfam" id="NF002728">
    <property type="entry name" value="PRK02624.1"/>
    <property type="match status" value="1"/>
</dbReference>
<dbReference type="PANTHER" id="PTHR34469">
    <property type="entry name" value="PHOTOSYSTEM II REACTION CENTER PROTEIN H"/>
    <property type="match status" value="1"/>
</dbReference>
<dbReference type="PANTHER" id="PTHR34469:SF4">
    <property type="entry name" value="PHOTOSYSTEM II REACTION CENTER PROTEIN H"/>
    <property type="match status" value="1"/>
</dbReference>
<dbReference type="Pfam" id="PF00737">
    <property type="entry name" value="PsbH"/>
    <property type="match status" value="1"/>
</dbReference>
<dbReference type="SUPFAM" id="SSF161025">
    <property type="entry name" value="Photosystem II 10 kDa phosphoprotein PsbH"/>
    <property type="match status" value="1"/>
</dbReference>
<protein>
    <recommendedName>
        <fullName evidence="1">Photosystem II reaction center protein H</fullName>
        <shortName evidence="1">PSII-H</shortName>
    </recommendedName>
</protein>
<proteinExistence type="inferred from homology"/>
<reference key="1">
    <citation type="journal article" date="1993" name="Nucleic Acids Res.">
        <title>Complete sequence of Euglena gracilis chloroplast DNA.</title>
        <authorList>
            <person name="Hallick R.B."/>
            <person name="Hong L."/>
            <person name="Drager R.G."/>
            <person name="Favreau M.R."/>
            <person name="Monfort A."/>
            <person name="Orsat B."/>
            <person name="Spielmann A."/>
            <person name="Stutz E."/>
        </authorList>
    </citation>
    <scope>NUCLEOTIDE SEQUENCE [LARGE SCALE GENOMIC DNA]</scope>
    <source>
        <strain>Z / UTEX 753</strain>
    </source>
</reference>
<sequence length="70" mass="7652">MTTISKNKTSNSKGKTTTLGTILKPLNSKYGKVLPGWGTAGIMLIFMTLFAIFLTIILEIYNSSVILDIK</sequence>
<organism>
    <name type="scientific">Euglena gracilis</name>
    <dbReference type="NCBI Taxonomy" id="3039"/>
    <lineage>
        <taxon>Eukaryota</taxon>
        <taxon>Discoba</taxon>
        <taxon>Euglenozoa</taxon>
        <taxon>Euglenida</taxon>
        <taxon>Spirocuta</taxon>
        <taxon>Euglenophyceae</taxon>
        <taxon>Euglenales</taxon>
        <taxon>Euglenaceae</taxon>
        <taxon>Euglena</taxon>
    </lineage>
</organism>
<keyword id="KW-0150">Chloroplast</keyword>
<keyword id="KW-0472">Membrane</keyword>
<keyword id="KW-0602">Photosynthesis</keyword>
<keyword id="KW-0604">Photosystem II</keyword>
<keyword id="KW-0934">Plastid</keyword>
<keyword id="KW-0793">Thylakoid</keyword>
<keyword id="KW-0812">Transmembrane</keyword>
<keyword id="KW-1133">Transmembrane helix</keyword>